<gene>
    <name type="primary">SCP2</name>
</gene>
<accession>Q07598</accession>
<reference key="1">
    <citation type="journal article" date="1993" name="Arch. Biochem. Biophys.">
        <title>Chicken sterol carrier protein 2/sterol carrier protein x: cDNA cloning reveals evolutionary conservation of structure and regulated expression.</title>
        <authorList>
            <person name="Pfeifer S.M."/>
            <person name="Sakuragi N."/>
            <person name="Ryan A."/>
            <person name="Johnson A.L."/>
            <person name="Deeley R.G."/>
            <person name="Billheimer J.T."/>
            <person name="Baker M.E."/>
            <person name="Strauss J.F. III"/>
        </authorList>
    </citation>
    <scope>NUCLEOTIDE SEQUENCE [MRNA]</scope>
    <scope>TISSUE SPECIFICITY</scope>
    <scope>DEVELOPMENTAL STAGE</scope>
    <source>
        <strain>White leghorn</strain>
        <tissue>Liver</tissue>
    </source>
</reference>
<comment type="function">
    <molecule>Isoform SCPx</molecule>
    <text evidence="3 4 5">Plays a crucial role in the peroxisomal oxidation of branched-chain fatty acids. Catalyzes the last step of the peroxisomal beta-oxidation of branched chain fatty acids and the side chain of the bile acid intermediates di- and trihydroxycoprostanic acids (DHCA and THCA) (By similarity). Also active with medium and long straight chain 3-oxoacyl-CoAs. Stimulates the microsomal conversion of 7-dehydrocholesterol to cholesterol and transfers phosphatidylcholine and 7-dehydrocholesterol between membrances, in vitro (By similarity). Isoforms SCP2 and SCPx cooperate in peroxisomal oxidation of certain naturally occurring tetramethyl-branched fatty acyl-CoAs (By similarity).</text>
</comment>
<comment type="function">
    <molecule>Isoform SCP2</molecule>
    <text evidence="3 4 5">Mediates the transfer of all common phospholipids, cholesterol and gangliosides from the endoplasmic reticulum to the plasma membrane. May play a role in regulating steroidogenesis (By similarity). Stimulates the microsomal conversion of 7-dehydrocholesterol to cholesterol (By similarity). Also binds fatty acids and fatty acyl Coenzyme A (CoA) such as phytanoyl-CoA. Involved in the regulation phospholipid synthesis in endoplasmic reticulum enhancing the incorporation of exogenous fatty acid into glycerides. Seems to stimulate the rate-limiting step in phosphatidic acid formation mediated by GPAT3. Isoforms SCP2 and SCPx cooperate in peroxisomal oxidation of certain naturally occurring tetramethyl-branched fatty acyl-CoAs (By similarity).</text>
</comment>
<comment type="catalytic activity">
    <molecule>Isoform SCPx</molecule>
    <reaction evidence="4">
        <text>choloyl-CoA + propanoyl-CoA = 3alpha,7alpha,12alpha-trihydroxy-24-oxo-5beta-cholestan-26-oyl-CoA + CoA</text>
        <dbReference type="Rhea" id="RHEA:16865"/>
        <dbReference type="ChEBI" id="CHEBI:57287"/>
        <dbReference type="ChEBI" id="CHEBI:57373"/>
        <dbReference type="ChEBI" id="CHEBI:57392"/>
        <dbReference type="ChEBI" id="CHEBI:58507"/>
        <dbReference type="EC" id="2.3.1.176"/>
    </reaction>
    <physiologicalReaction direction="right-to-left" evidence="4">
        <dbReference type="Rhea" id="RHEA:16867"/>
    </physiologicalReaction>
</comment>
<comment type="catalytic activity">
    <molecule>Isoform SCPx</molecule>
    <reaction evidence="3">
        <text>an acyl-CoA + acetyl-CoA = a 3-oxoacyl-CoA + CoA</text>
        <dbReference type="Rhea" id="RHEA:21564"/>
        <dbReference type="ChEBI" id="CHEBI:57287"/>
        <dbReference type="ChEBI" id="CHEBI:57288"/>
        <dbReference type="ChEBI" id="CHEBI:58342"/>
        <dbReference type="ChEBI" id="CHEBI:90726"/>
        <dbReference type="EC" id="2.3.1.16"/>
    </reaction>
    <physiologicalReaction direction="right-to-left" evidence="3">
        <dbReference type="Rhea" id="RHEA:21566"/>
    </physiologicalReaction>
</comment>
<comment type="catalytic activity">
    <molecule>Isoform SCPx</molecule>
    <reaction evidence="3">
        <text>hexanoyl-CoA + acetyl-CoA = 3-oxooctanoyl-CoA + CoA</text>
        <dbReference type="Rhea" id="RHEA:31203"/>
        <dbReference type="ChEBI" id="CHEBI:57287"/>
        <dbReference type="ChEBI" id="CHEBI:57288"/>
        <dbReference type="ChEBI" id="CHEBI:62619"/>
        <dbReference type="ChEBI" id="CHEBI:62620"/>
    </reaction>
    <physiologicalReaction direction="right-to-left" evidence="3">
        <dbReference type="Rhea" id="RHEA:31205"/>
    </physiologicalReaction>
</comment>
<comment type="catalytic activity">
    <molecule>Isoform SCPx</molecule>
    <reaction evidence="3">
        <text>tetradecanoyl-CoA + acetyl-CoA = 3-oxohexadecanoyl-CoA + CoA</text>
        <dbReference type="Rhea" id="RHEA:18161"/>
        <dbReference type="ChEBI" id="CHEBI:57287"/>
        <dbReference type="ChEBI" id="CHEBI:57288"/>
        <dbReference type="ChEBI" id="CHEBI:57349"/>
        <dbReference type="ChEBI" id="CHEBI:57385"/>
        <dbReference type="EC" id="2.3.1.155"/>
    </reaction>
    <physiologicalReaction direction="right-to-left" evidence="3">
        <dbReference type="Rhea" id="RHEA:18163"/>
    </physiologicalReaction>
</comment>
<comment type="catalytic activity">
    <molecule>Isoform SCPx</molecule>
    <reaction evidence="3">
        <text>3-oxohexadecanedioyl-CoA + CoA = tetradecanedioyl-CoA + acetyl-CoA</text>
        <dbReference type="Rhea" id="RHEA:40343"/>
        <dbReference type="ChEBI" id="CHEBI:57287"/>
        <dbReference type="ChEBI" id="CHEBI:57288"/>
        <dbReference type="ChEBI" id="CHEBI:77081"/>
        <dbReference type="ChEBI" id="CHEBI:77084"/>
    </reaction>
    <physiologicalReaction direction="left-to-right" evidence="3">
        <dbReference type="Rhea" id="RHEA:40344"/>
    </physiologicalReaction>
</comment>
<comment type="catalytic activity">
    <molecule>Isoform SCPx</molecule>
    <reaction evidence="3">
        <text>propanoyl-CoA + tetradecanoyl-CoA = 3-oxo-2-methylhexadecanoyl-CoA + CoA</text>
        <dbReference type="Rhea" id="RHEA:46344"/>
        <dbReference type="ChEBI" id="CHEBI:57287"/>
        <dbReference type="ChEBI" id="CHEBI:57385"/>
        <dbReference type="ChEBI" id="CHEBI:57392"/>
        <dbReference type="ChEBI" id="CHEBI:86042"/>
    </reaction>
    <physiologicalReaction direction="right-to-left" evidence="3">
        <dbReference type="Rhea" id="RHEA:46346"/>
    </physiologicalReaction>
</comment>
<comment type="catalytic activity">
    <molecule>Isoform SCPx</molecule>
    <reaction evidence="3">
        <text>butanoyl-CoA + acetyl-CoA = 3-oxohexanoyl-CoA + CoA</text>
        <dbReference type="Rhea" id="RHEA:31111"/>
        <dbReference type="ChEBI" id="CHEBI:57287"/>
        <dbReference type="ChEBI" id="CHEBI:57288"/>
        <dbReference type="ChEBI" id="CHEBI:57371"/>
        <dbReference type="ChEBI" id="CHEBI:62418"/>
    </reaction>
    <physiologicalReaction direction="right-to-left" evidence="3">
        <dbReference type="Rhea" id="RHEA:31113"/>
    </physiologicalReaction>
</comment>
<comment type="catalytic activity">
    <molecule>Isoform SCPx</molecule>
    <reaction evidence="3">
        <text>octanoyl-CoA + acetyl-CoA = 3-oxodecanoyl-CoA + CoA</text>
        <dbReference type="Rhea" id="RHEA:31087"/>
        <dbReference type="ChEBI" id="CHEBI:57287"/>
        <dbReference type="ChEBI" id="CHEBI:57288"/>
        <dbReference type="ChEBI" id="CHEBI:57386"/>
        <dbReference type="ChEBI" id="CHEBI:62548"/>
    </reaction>
    <physiologicalReaction direction="right-to-left" evidence="3">
        <dbReference type="Rhea" id="RHEA:31089"/>
    </physiologicalReaction>
</comment>
<comment type="catalytic activity">
    <molecule>Isoform SCPx</molecule>
    <reaction evidence="3">
        <text>decanoyl-CoA + acetyl-CoA = 3-oxododecanoyl-CoA + CoA</text>
        <dbReference type="Rhea" id="RHEA:31183"/>
        <dbReference type="ChEBI" id="CHEBI:57287"/>
        <dbReference type="ChEBI" id="CHEBI:57288"/>
        <dbReference type="ChEBI" id="CHEBI:61430"/>
        <dbReference type="ChEBI" id="CHEBI:62615"/>
    </reaction>
    <physiologicalReaction direction="right-to-left" evidence="3">
        <dbReference type="Rhea" id="RHEA:31185"/>
    </physiologicalReaction>
</comment>
<comment type="catalytic activity">
    <molecule>Isoform SCPx</molecule>
    <reaction evidence="3">
        <text>dodecanoyl-CoA + acetyl-CoA = 3-oxotetradecanoyl-CoA + CoA</text>
        <dbReference type="Rhea" id="RHEA:31091"/>
        <dbReference type="ChEBI" id="CHEBI:57287"/>
        <dbReference type="ChEBI" id="CHEBI:57288"/>
        <dbReference type="ChEBI" id="CHEBI:57375"/>
        <dbReference type="ChEBI" id="CHEBI:62543"/>
    </reaction>
    <physiologicalReaction direction="right-to-left" evidence="3">
        <dbReference type="Rhea" id="RHEA:31093"/>
    </physiologicalReaction>
</comment>
<comment type="catalytic activity">
    <molecule>Isoform SCPx</molecule>
    <reaction evidence="3">
        <text>hexadecanoyl-CoA + acetyl-CoA = 3-oxooctadecanoyl-CoA + CoA</text>
        <dbReference type="Rhea" id="RHEA:35279"/>
        <dbReference type="ChEBI" id="CHEBI:57287"/>
        <dbReference type="ChEBI" id="CHEBI:57288"/>
        <dbReference type="ChEBI" id="CHEBI:57379"/>
        <dbReference type="ChEBI" id="CHEBI:71407"/>
    </reaction>
    <physiologicalReaction direction="right-to-left" evidence="3">
        <dbReference type="Rhea" id="RHEA:35281"/>
    </physiologicalReaction>
</comment>
<comment type="catalytic activity">
    <molecule>Isoform SCPx</molecule>
    <reaction evidence="3">
        <text>3-oxo-(9Z-octadecenoyl)-CoA + CoA = (7Z)-hexadecenoyl-CoA + acetyl-CoA</text>
        <dbReference type="Rhea" id="RHEA:47400"/>
        <dbReference type="ChEBI" id="CHEBI:57287"/>
        <dbReference type="ChEBI" id="CHEBI:57288"/>
        <dbReference type="ChEBI" id="CHEBI:87695"/>
        <dbReference type="ChEBI" id="CHEBI:87698"/>
    </reaction>
    <physiologicalReaction direction="left-to-right" evidence="3">
        <dbReference type="Rhea" id="RHEA:47401"/>
    </physiologicalReaction>
</comment>
<comment type="catalytic activity">
    <molecule>Isoform SCPx</molecule>
    <reaction evidence="3">
        <text>7-dehydrocholesterol(in) = 7-dehydrocholesterol(out)</text>
        <dbReference type="Rhea" id="RHEA:62960"/>
        <dbReference type="ChEBI" id="CHEBI:17759"/>
    </reaction>
</comment>
<comment type="catalytic activity">
    <molecule>Isoform SCP2</molecule>
    <reaction evidence="4">
        <text>7-dehydrocholesterol(in) = 7-dehydrocholesterol(out)</text>
        <dbReference type="Rhea" id="RHEA:62960"/>
        <dbReference type="ChEBI" id="CHEBI:17759"/>
    </reaction>
</comment>
<comment type="subcellular location">
    <molecule>Isoform SCP2</molecule>
    <subcellularLocation>
        <location evidence="5">Peroxisome</location>
    </subcellularLocation>
    <subcellularLocation>
        <location evidence="4">Cytoplasm</location>
    </subcellularLocation>
    <subcellularLocation>
        <location evidence="4">Mitochondrion</location>
    </subcellularLocation>
    <subcellularLocation>
        <location evidence="5">Endoplasmic reticulum</location>
    </subcellularLocation>
    <subcellularLocation>
        <location evidence="5">Mitochondrion</location>
    </subcellularLocation>
</comment>
<comment type="subcellular location">
    <molecule>Isoform SCPx</molecule>
    <subcellularLocation>
        <location evidence="3">Peroxisome</location>
    </subcellularLocation>
</comment>
<comment type="alternative products">
    <event type="alternative initiation"/>
    <isoform>
        <id>Q07598-1</id>
        <name>SCPx</name>
        <sequence type="displayed"/>
    </isoform>
    <isoform>
        <id>Q07598-2</id>
        <name>SCP2</name>
        <sequence type="described" ref="VSP_018898"/>
    </isoform>
</comment>
<comment type="tissue specificity">
    <text>Expressed at high levels in the liver, intestine and ovarian granulosa cells.</text>
</comment>
<comment type="developmental stage">
    <molecule>Isoform SCPx</molecule>
    <text evidence="7">Levels remain unchanged during day 20 embryo to 4 weeks post-hatch.</text>
</comment>
<comment type="developmental stage">
    <molecule>Isoform SCP2</molecule>
    <text evidence="7">A 10-fold increase in expression levels is seen by 1 week post-hatch and declines slightly between 3 and 4 weeks post-hatch.</text>
</comment>
<comment type="PTM">
    <molecule>Isoform SCP2</molecule>
    <text evidence="2">preSCP2, a protein with a molecular mass of about 15 kDa, is processed into its mature form (SCP2) by proteolytic cleavage of a 20 residue leader sequence after translocation into peroxisomes.</text>
</comment>
<comment type="miscellaneous">
    <molecule>Isoform SCP2</molecule>
    <text evidence="8">Contains a putative mitochondrial transit peptide at positions 1-20.</text>
</comment>
<comment type="similarity">
    <text evidence="8">In the N-terminal section; belongs to the thiolase-like superfamily. Thiolase family.</text>
</comment>
<sequence>ARVCEERGGPAAIMQRRVFVVGVGMTKFAKPSENSVDYPDLAKEAGQKALADAGIPYSAVEQACVGYVYGDSTCGQRAIYHGLGLTGIPIINVNNNCATGSTALFMSRQLVEGGLADCVLALGFERMAKGSLASGFSDRTNPMDKHLEIMINKYGLASAPITPQMFANAGKEHMEKYGTNPEYFAKIAWKNHSHSTNNPYSQFQKKYTLDEVLQSRKVFDFLTVLQCCPTSNGAAAAILASEDFVKRHKLQPQAVEILAQVMATDYPSTFEENSCMKMVGYDMTKKAAEKCFKKAGLKPTDVDVIELHDCFSVNEFITYEALGLCPEGKACDLIDRGDNTYGGKWVINPSGGLISKGHPLGATGLAQSAELCWQLRGLAGRREVGGARRALQHNLGLGGAVVVTLYAMGFPGAASDGGVTAVPLSAAVDGFKSHLVFKEIEKKLQEEGEQFVKKIGGVFAFKIKDGPGGKEATWVVDVKNGKGSVAVNSDKKADCTITMADTDLLALMTGKMNPQTAFFQGKLKISGNMGMAMKLQNLQLQPGKAKL</sequence>
<feature type="chain" id="PRO_0000034089" description="Sterol carrier protein 2">
    <location>
        <begin position="1" status="less than"/>
        <end position="547"/>
    </location>
</feature>
<feature type="domain" description="SCP2">
    <location>
        <begin position="433"/>
        <end position="543"/>
    </location>
</feature>
<feature type="short sequence motif" description="Microbody targeting signal" evidence="6">
    <location>
        <begin position="545"/>
        <end position="547"/>
    </location>
</feature>
<feature type="site" description="Essential for transport of lipids" evidence="1">
    <location>
        <position position="494"/>
    </location>
</feature>
<feature type="splice variant" id="VSP_018898" description="In isoform SCP2." evidence="8">
    <location>
        <begin position="1" status="less than"/>
        <end position="407"/>
    </location>
</feature>
<feature type="non-terminal residue">
    <location>
        <position position="1"/>
    </location>
</feature>
<protein>
    <recommendedName>
        <fullName>Sterol carrier protein 2</fullName>
        <shortName>SCP-2</shortName>
    </recommendedName>
    <alternativeName>
        <fullName>Acetyl-CoA C-myristoyltransferase</fullName>
        <ecNumber evidence="3">2.3.1.155</ecNumber>
    </alternativeName>
    <alternativeName>
        <fullName>Non-specific lipid-transfer protein</fullName>
        <shortName>NSL-TP</shortName>
    </alternativeName>
    <alternativeName>
        <fullName>Propanoyl-CoA C-acyltransferase</fullName>
        <ecNumber evidence="3">2.3.1.176</ecNumber>
    </alternativeName>
    <alternativeName>
        <fullName>SCP-2/3-oxoacyl-CoA thiolase</fullName>
    </alternativeName>
    <alternativeName>
        <fullName>SCP-2/thiolase</fullName>
        <ecNumber evidence="3">2.3.1.16</ecNumber>
    </alternativeName>
    <alternativeName>
        <fullName>SCP-chi</fullName>
    </alternativeName>
    <alternativeName>
        <fullName>SCPX</fullName>
    </alternativeName>
    <alternativeName>
        <fullName>Sterol carrier protein X</fullName>
        <shortName>SCP-X</shortName>
    </alternativeName>
</protein>
<dbReference type="EC" id="2.3.1.155" evidence="3"/>
<dbReference type="EC" id="2.3.1.176" evidence="3"/>
<dbReference type="EC" id="2.3.1.16" evidence="3"/>
<dbReference type="EMBL" id="L09231">
    <property type="protein sequence ID" value="AAA02488.1"/>
    <property type="molecule type" value="mRNA"/>
</dbReference>
<dbReference type="PIR" id="S34744">
    <property type="entry name" value="S34744"/>
</dbReference>
<dbReference type="RefSeq" id="NP_001292129.1">
    <property type="nucleotide sequence ID" value="NM_001305200.1"/>
</dbReference>
<dbReference type="SMR" id="Q07598"/>
<dbReference type="FunCoup" id="Q07598">
    <property type="interactions" value="1922"/>
</dbReference>
<dbReference type="STRING" id="9031.ENSGALP00000017306"/>
<dbReference type="PaxDb" id="9031-ENSGALP00000017306"/>
<dbReference type="GeneID" id="396550"/>
<dbReference type="KEGG" id="gga:396550"/>
<dbReference type="CTD" id="6342"/>
<dbReference type="VEuPathDB" id="HostDB:geneid_396550"/>
<dbReference type="eggNOG" id="KOG1406">
    <property type="taxonomic scope" value="Eukaryota"/>
</dbReference>
<dbReference type="eggNOG" id="KOG4170">
    <property type="taxonomic scope" value="Eukaryota"/>
</dbReference>
<dbReference type="InParanoid" id="Q07598"/>
<dbReference type="OrthoDB" id="542135at2759"/>
<dbReference type="PhylomeDB" id="Q07598"/>
<dbReference type="Proteomes" id="UP000000539">
    <property type="component" value="Unassembled WGS sequence"/>
</dbReference>
<dbReference type="GO" id="GO:0005737">
    <property type="term" value="C:cytoplasm"/>
    <property type="evidence" value="ECO:0000250"/>
    <property type="project" value="UniProtKB"/>
</dbReference>
<dbReference type="GO" id="GO:0005783">
    <property type="term" value="C:endoplasmic reticulum"/>
    <property type="evidence" value="ECO:0007669"/>
    <property type="project" value="UniProtKB-SubCell"/>
</dbReference>
<dbReference type="GO" id="GO:0005739">
    <property type="term" value="C:mitochondrion"/>
    <property type="evidence" value="ECO:0000250"/>
    <property type="project" value="UniProtKB"/>
</dbReference>
<dbReference type="GO" id="GO:0005782">
    <property type="term" value="C:peroxisomal matrix"/>
    <property type="evidence" value="ECO:0000250"/>
    <property type="project" value="UniProtKB"/>
</dbReference>
<dbReference type="GO" id="GO:0005777">
    <property type="term" value="C:peroxisome"/>
    <property type="evidence" value="ECO:0000250"/>
    <property type="project" value="UniProtKB"/>
</dbReference>
<dbReference type="GO" id="GO:0003988">
    <property type="term" value="F:acetyl-CoA C-acyltransferase activity"/>
    <property type="evidence" value="ECO:0000250"/>
    <property type="project" value="UniProtKB"/>
</dbReference>
<dbReference type="GO" id="GO:0050633">
    <property type="term" value="F:acetyl-CoA C-myristoyltransferase activity"/>
    <property type="evidence" value="ECO:0000250"/>
    <property type="project" value="UniProtKB"/>
</dbReference>
<dbReference type="GO" id="GO:0120020">
    <property type="term" value="F:cholesterol transfer activity"/>
    <property type="evidence" value="ECO:0000250"/>
    <property type="project" value="UniProtKB"/>
</dbReference>
<dbReference type="GO" id="GO:0008289">
    <property type="term" value="F:lipid binding"/>
    <property type="evidence" value="ECO:0007669"/>
    <property type="project" value="UniProtKB-KW"/>
</dbReference>
<dbReference type="GO" id="GO:0120019">
    <property type="term" value="F:phosphatidylcholine transfer activity"/>
    <property type="evidence" value="ECO:0000250"/>
    <property type="project" value="UniProtKB"/>
</dbReference>
<dbReference type="GO" id="GO:0033814">
    <property type="term" value="F:propanoyl-CoA C-acyltransferase activity"/>
    <property type="evidence" value="ECO:0007669"/>
    <property type="project" value="RHEA"/>
</dbReference>
<dbReference type="GO" id="GO:0008206">
    <property type="term" value="P:bile acid metabolic process"/>
    <property type="evidence" value="ECO:0000250"/>
    <property type="project" value="UniProtKB"/>
</dbReference>
<dbReference type="GO" id="GO:0006635">
    <property type="term" value="P:fatty acid beta-oxidation"/>
    <property type="evidence" value="ECO:0000250"/>
    <property type="project" value="UniProtKB"/>
</dbReference>
<dbReference type="GO" id="GO:0006869">
    <property type="term" value="P:lipid transport"/>
    <property type="evidence" value="ECO:0007669"/>
    <property type="project" value="UniProtKB-KW"/>
</dbReference>
<dbReference type="CDD" id="cd00826">
    <property type="entry name" value="nondecarbox_cond_enzymes"/>
    <property type="match status" value="1"/>
</dbReference>
<dbReference type="FunFam" id="3.40.47.10:FF:000016">
    <property type="entry name" value="Non-specific lipid-transfer protein"/>
    <property type="match status" value="1"/>
</dbReference>
<dbReference type="FunFam" id="3.30.1050.10:FF:000001">
    <property type="entry name" value="Putative Non-specific lipid-transfer protein"/>
    <property type="match status" value="1"/>
</dbReference>
<dbReference type="Gene3D" id="3.40.47.10">
    <property type="match status" value="1"/>
</dbReference>
<dbReference type="Gene3D" id="3.30.1050.10">
    <property type="entry name" value="SCP2 sterol-binding domain"/>
    <property type="match status" value="1"/>
</dbReference>
<dbReference type="InterPro" id="IPR003033">
    <property type="entry name" value="SCP2_sterol-bd_dom"/>
</dbReference>
<dbReference type="InterPro" id="IPR036527">
    <property type="entry name" value="SCP2_sterol-bd_dom_sf"/>
</dbReference>
<dbReference type="InterPro" id="IPR016039">
    <property type="entry name" value="Thiolase-like"/>
</dbReference>
<dbReference type="InterPro" id="IPR020615">
    <property type="entry name" value="Thiolase_acyl_enz_int_AS"/>
</dbReference>
<dbReference type="InterPro" id="IPR055140">
    <property type="entry name" value="Thiolase_C_2"/>
</dbReference>
<dbReference type="InterPro" id="IPR020613">
    <property type="entry name" value="Thiolase_CS"/>
</dbReference>
<dbReference type="InterPro" id="IPR020616">
    <property type="entry name" value="Thiolase_N"/>
</dbReference>
<dbReference type="NCBIfam" id="NF006102">
    <property type="entry name" value="PRK08256.1"/>
    <property type="match status" value="1"/>
</dbReference>
<dbReference type="PANTHER" id="PTHR42870">
    <property type="entry name" value="ACETYL-COA C-ACETYLTRANSFERASE"/>
    <property type="match status" value="1"/>
</dbReference>
<dbReference type="PANTHER" id="PTHR42870:SF1">
    <property type="entry name" value="NON-SPECIFIC LIPID-TRANSFER PROTEIN-LIKE 2"/>
    <property type="match status" value="1"/>
</dbReference>
<dbReference type="Pfam" id="PF02036">
    <property type="entry name" value="SCP2"/>
    <property type="match status" value="1"/>
</dbReference>
<dbReference type="Pfam" id="PF22691">
    <property type="entry name" value="Thiolase_C_1"/>
    <property type="match status" value="1"/>
</dbReference>
<dbReference type="Pfam" id="PF00108">
    <property type="entry name" value="Thiolase_N"/>
    <property type="match status" value="1"/>
</dbReference>
<dbReference type="SUPFAM" id="SSF55718">
    <property type="entry name" value="SCP-like"/>
    <property type="match status" value="1"/>
</dbReference>
<dbReference type="SUPFAM" id="SSF53901">
    <property type="entry name" value="Thiolase-like"/>
    <property type="match status" value="2"/>
</dbReference>
<dbReference type="PROSITE" id="PS00098">
    <property type="entry name" value="THIOLASE_1"/>
    <property type="match status" value="1"/>
</dbReference>
<dbReference type="PROSITE" id="PS00737">
    <property type="entry name" value="THIOLASE_2"/>
    <property type="match status" value="1"/>
</dbReference>
<name>SCP2_CHICK</name>
<evidence type="ECO:0000250" key="1"/>
<evidence type="ECO:0000250" key="2">
    <source>
        <dbReference type="UniProtKB" id="O62742"/>
    </source>
</evidence>
<evidence type="ECO:0000250" key="3">
    <source>
        <dbReference type="UniProtKB" id="P11915"/>
    </source>
</evidence>
<evidence type="ECO:0000250" key="4">
    <source>
        <dbReference type="UniProtKB" id="P22307"/>
    </source>
</evidence>
<evidence type="ECO:0000250" key="5">
    <source>
        <dbReference type="UniProtKB" id="P32020"/>
    </source>
</evidence>
<evidence type="ECO:0000255" key="6"/>
<evidence type="ECO:0000269" key="7">
    <source>
    </source>
</evidence>
<evidence type="ECO:0000305" key="8"/>
<proteinExistence type="evidence at transcript level"/>
<organism>
    <name type="scientific">Gallus gallus</name>
    <name type="common">Chicken</name>
    <dbReference type="NCBI Taxonomy" id="9031"/>
    <lineage>
        <taxon>Eukaryota</taxon>
        <taxon>Metazoa</taxon>
        <taxon>Chordata</taxon>
        <taxon>Craniata</taxon>
        <taxon>Vertebrata</taxon>
        <taxon>Euteleostomi</taxon>
        <taxon>Archelosauria</taxon>
        <taxon>Archosauria</taxon>
        <taxon>Dinosauria</taxon>
        <taxon>Saurischia</taxon>
        <taxon>Theropoda</taxon>
        <taxon>Coelurosauria</taxon>
        <taxon>Aves</taxon>
        <taxon>Neognathae</taxon>
        <taxon>Galloanserae</taxon>
        <taxon>Galliformes</taxon>
        <taxon>Phasianidae</taxon>
        <taxon>Phasianinae</taxon>
        <taxon>Gallus</taxon>
    </lineage>
</organism>
<keyword id="KW-0012">Acyltransferase</keyword>
<keyword id="KW-0024">Alternative initiation</keyword>
<keyword id="KW-0963">Cytoplasm</keyword>
<keyword id="KW-0256">Endoplasmic reticulum</keyword>
<keyword id="KW-0443">Lipid metabolism</keyword>
<keyword id="KW-0445">Lipid transport</keyword>
<keyword id="KW-0446">Lipid-binding</keyword>
<keyword id="KW-0496">Mitochondrion</keyword>
<keyword id="KW-0576">Peroxisome</keyword>
<keyword id="KW-1185">Reference proteome</keyword>
<keyword id="KW-0808">Transferase</keyword>
<keyword id="KW-0813">Transport</keyword>